<protein>
    <recommendedName>
        <fullName evidence="1">Protein-export protein SecB</fullName>
    </recommendedName>
</protein>
<gene>
    <name evidence="1" type="primary">secB</name>
    <name type="ordered locus">HAPS_1477</name>
</gene>
<accession>B8F6T7</accession>
<sequence>MAEENQVATEEQQTPFEMQIQRIYIKDVSFEAPNLPNIFHQEWKPQLGFDLDTETREIGEDTYEVVLHINVQTTLEDSNDVAFICEVKQAGVFTIKGIEGIQLAHCLAAKCPEVLYPYARELISSLVNRGTFPALNLSPVNFDALFMDYLARQQAEENGESTTNTTLN</sequence>
<feature type="chain" id="PRO_1000148704" description="Protein-export protein SecB">
    <location>
        <begin position="1"/>
        <end position="168"/>
    </location>
</feature>
<reference key="1">
    <citation type="journal article" date="2009" name="J. Bacteriol.">
        <title>Complete genome sequence of Haemophilus parasuis SH0165.</title>
        <authorList>
            <person name="Yue M."/>
            <person name="Yang F."/>
            <person name="Yang J."/>
            <person name="Bei W."/>
            <person name="Cai X."/>
            <person name="Chen L."/>
            <person name="Dong J."/>
            <person name="Zhou R."/>
            <person name="Jin M."/>
            <person name="Jin Q."/>
            <person name="Chen H."/>
        </authorList>
    </citation>
    <scope>NUCLEOTIDE SEQUENCE [LARGE SCALE GENOMIC DNA]</scope>
    <source>
        <strain>SH0165</strain>
    </source>
</reference>
<keyword id="KW-0143">Chaperone</keyword>
<keyword id="KW-0963">Cytoplasm</keyword>
<keyword id="KW-0653">Protein transport</keyword>
<keyword id="KW-1185">Reference proteome</keyword>
<keyword id="KW-0811">Translocation</keyword>
<keyword id="KW-0813">Transport</keyword>
<dbReference type="EMBL" id="CP001321">
    <property type="protein sequence ID" value="ACL33039.1"/>
    <property type="molecule type" value="Genomic_DNA"/>
</dbReference>
<dbReference type="RefSeq" id="WP_005711146.1">
    <property type="nucleotide sequence ID" value="NC_011852.1"/>
</dbReference>
<dbReference type="SMR" id="B8F6T7"/>
<dbReference type="STRING" id="557723.HAPS_1477"/>
<dbReference type="GeneID" id="66619903"/>
<dbReference type="KEGG" id="hap:HAPS_1477"/>
<dbReference type="HOGENOM" id="CLU_111574_1_0_6"/>
<dbReference type="Proteomes" id="UP000006743">
    <property type="component" value="Chromosome"/>
</dbReference>
<dbReference type="GO" id="GO:0005737">
    <property type="term" value="C:cytoplasm"/>
    <property type="evidence" value="ECO:0007669"/>
    <property type="project" value="UniProtKB-SubCell"/>
</dbReference>
<dbReference type="GO" id="GO:0051082">
    <property type="term" value="F:unfolded protein binding"/>
    <property type="evidence" value="ECO:0007669"/>
    <property type="project" value="InterPro"/>
</dbReference>
<dbReference type="GO" id="GO:0006457">
    <property type="term" value="P:protein folding"/>
    <property type="evidence" value="ECO:0007669"/>
    <property type="project" value="UniProtKB-UniRule"/>
</dbReference>
<dbReference type="GO" id="GO:0051262">
    <property type="term" value="P:protein tetramerization"/>
    <property type="evidence" value="ECO:0007669"/>
    <property type="project" value="InterPro"/>
</dbReference>
<dbReference type="GO" id="GO:0015031">
    <property type="term" value="P:protein transport"/>
    <property type="evidence" value="ECO:0007669"/>
    <property type="project" value="UniProtKB-UniRule"/>
</dbReference>
<dbReference type="CDD" id="cd00557">
    <property type="entry name" value="Translocase_SecB"/>
    <property type="match status" value="1"/>
</dbReference>
<dbReference type="Gene3D" id="3.10.420.10">
    <property type="entry name" value="SecB-like"/>
    <property type="match status" value="1"/>
</dbReference>
<dbReference type="HAMAP" id="MF_00821">
    <property type="entry name" value="SecB"/>
    <property type="match status" value="1"/>
</dbReference>
<dbReference type="InterPro" id="IPR003708">
    <property type="entry name" value="SecB"/>
</dbReference>
<dbReference type="InterPro" id="IPR035958">
    <property type="entry name" value="SecB-like_sf"/>
</dbReference>
<dbReference type="NCBIfam" id="NF004393">
    <property type="entry name" value="PRK05751.1-4"/>
    <property type="match status" value="1"/>
</dbReference>
<dbReference type="NCBIfam" id="TIGR00809">
    <property type="entry name" value="secB"/>
    <property type="match status" value="1"/>
</dbReference>
<dbReference type="PANTHER" id="PTHR36918">
    <property type="match status" value="1"/>
</dbReference>
<dbReference type="PANTHER" id="PTHR36918:SF1">
    <property type="entry name" value="PROTEIN-EXPORT PROTEIN SECB"/>
    <property type="match status" value="1"/>
</dbReference>
<dbReference type="Pfam" id="PF02556">
    <property type="entry name" value="SecB"/>
    <property type="match status" value="1"/>
</dbReference>
<dbReference type="PRINTS" id="PR01594">
    <property type="entry name" value="SECBCHAPRONE"/>
</dbReference>
<dbReference type="SUPFAM" id="SSF54611">
    <property type="entry name" value="SecB-like"/>
    <property type="match status" value="1"/>
</dbReference>
<organism>
    <name type="scientific">Glaesserella parasuis serovar 5 (strain SH0165)</name>
    <name type="common">Haemophilus parasuis</name>
    <dbReference type="NCBI Taxonomy" id="557723"/>
    <lineage>
        <taxon>Bacteria</taxon>
        <taxon>Pseudomonadati</taxon>
        <taxon>Pseudomonadota</taxon>
        <taxon>Gammaproteobacteria</taxon>
        <taxon>Pasteurellales</taxon>
        <taxon>Pasteurellaceae</taxon>
        <taxon>Glaesserella</taxon>
    </lineage>
</organism>
<comment type="function">
    <text evidence="1">One of the proteins required for the normal export of preproteins out of the cell cytoplasm. It is a molecular chaperone that binds to a subset of precursor proteins, maintaining them in a translocation-competent state. It also specifically binds to its receptor SecA.</text>
</comment>
<comment type="subunit">
    <text evidence="1">Homotetramer, a dimer of dimers. One homotetramer interacts with 1 SecA dimer.</text>
</comment>
<comment type="subcellular location">
    <subcellularLocation>
        <location evidence="1">Cytoplasm</location>
    </subcellularLocation>
</comment>
<comment type="similarity">
    <text evidence="1">Belongs to the SecB family.</text>
</comment>
<evidence type="ECO:0000255" key="1">
    <source>
        <dbReference type="HAMAP-Rule" id="MF_00821"/>
    </source>
</evidence>
<name>SECB_GLAP5</name>
<proteinExistence type="inferred from homology"/>